<protein>
    <recommendedName>
        <fullName evidence="1">Xanthine phosphoribosyltransferase</fullName>
        <shortName evidence="1">XPRTase</shortName>
        <ecNumber evidence="1">2.4.2.22</ecNumber>
    </recommendedName>
</protein>
<gene>
    <name evidence="1" type="primary">xpt</name>
    <name type="ordered locus">SPJ_1752</name>
</gene>
<accession>C1CG72</accession>
<reference key="1">
    <citation type="journal article" date="2010" name="Genome Biol.">
        <title>Structure and dynamics of the pan-genome of Streptococcus pneumoniae and closely related species.</title>
        <authorList>
            <person name="Donati C."/>
            <person name="Hiller N.L."/>
            <person name="Tettelin H."/>
            <person name="Muzzi A."/>
            <person name="Croucher N.J."/>
            <person name="Angiuoli S.V."/>
            <person name="Oggioni M."/>
            <person name="Dunning Hotopp J.C."/>
            <person name="Hu F.Z."/>
            <person name="Riley D.R."/>
            <person name="Covacci A."/>
            <person name="Mitchell T.J."/>
            <person name="Bentley S.D."/>
            <person name="Kilian M."/>
            <person name="Ehrlich G.D."/>
            <person name="Rappuoli R."/>
            <person name="Moxon E.R."/>
            <person name="Masignani V."/>
        </authorList>
    </citation>
    <scope>NUCLEOTIDE SEQUENCE [LARGE SCALE GENOMIC DNA]</scope>
    <source>
        <strain>JJA</strain>
    </source>
</reference>
<name>XPT_STRZJ</name>
<dbReference type="EC" id="2.4.2.22" evidence="1"/>
<dbReference type="EMBL" id="CP000919">
    <property type="protein sequence ID" value="ACO19073.1"/>
    <property type="molecule type" value="Genomic_DNA"/>
</dbReference>
<dbReference type="RefSeq" id="WP_000770408.1">
    <property type="nucleotide sequence ID" value="NC_012466.1"/>
</dbReference>
<dbReference type="SMR" id="C1CG72"/>
<dbReference type="KEGG" id="sjj:SPJ_1752"/>
<dbReference type="HOGENOM" id="CLU_099015_0_0_9"/>
<dbReference type="UniPathway" id="UPA00602">
    <property type="reaction ID" value="UER00658"/>
</dbReference>
<dbReference type="Proteomes" id="UP000002206">
    <property type="component" value="Chromosome"/>
</dbReference>
<dbReference type="GO" id="GO:0005737">
    <property type="term" value="C:cytoplasm"/>
    <property type="evidence" value="ECO:0007669"/>
    <property type="project" value="UniProtKB-SubCell"/>
</dbReference>
<dbReference type="GO" id="GO:0000310">
    <property type="term" value="F:xanthine phosphoribosyltransferase activity"/>
    <property type="evidence" value="ECO:0007669"/>
    <property type="project" value="UniProtKB-UniRule"/>
</dbReference>
<dbReference type="GO" id="GO:0006166">
    <property type="term" value="P:purine ribonucleoside salvage"/>
    <property type="evidence" value="ECO:0007669"/>
    <property type="project" value="UniProtKB-KW"/>
</dbReference>
<dbReference type="GO" id="GO:0046110">
    <property type="term" value="P:xanthine metabolic process"/>
    <property type="evidence" value="ECO:0007669"/>
    <property type="project" value="InterPro"/>
</dbReference>
<dbReference type="GO" id="GO:0032265">
    <property type="term" value="P:XMP salvage"/>
    <property type="evidence" value="ECO:0007669"/>
    <property type="project" value="UniProtKB-UniRule"/>
</dbReference>
<dbReference type="CDD" id="cd06223">
    <property type="entry name" value="PRTases_typeI"/>
    <property type="match status" value="1"/>
</dbReference>
<dbReference type="Gene3D" id="3.40.50.2020">
    <property type="match status" value="1"/>
</dbReference>
<dbReference type="HAMAP" id="MF_01184">
    <property type="entry name" value="XPRTase"/>
    <property type="match status" value="1"/>
</dbReference>
<dbReference type="InterPro" id="IPR000836">
    <property type="entry name" value="PRibTrfase_dom"/>
</dbReference>
<dbReference type="InterPro" id="IPR029057">
    <property type="entry name" value="PRTase-like"/>
</dbReference>
<dbReference type="InterPro" id="IPR050118">
    <property type="entry name" value="Pur/Pyrimidine_PRTase"/>
</dbReference>
<dbReference type="InterPro" id="IPR010079">
    <property type="entry name" value="Xanthine_PRibTrfase"/>
</dbReference>
<dbReference type="NCBIfam" id="NF006671">
    <property type="entry name" value="PRK09219.1"/>
    <property type="match status" value="1"/>
</dbReference>
<dbReference type="NCBIfam" id="TIGR01744">
    <property type="entry name" value="XPRTase"/>
    <property type="match status" value="1"/>
</dbReference>
<dbReference type="PANTHER" id="PTHR43864">
    <property type="entry name" value="HYPOXANTHINE/GUANINE PHOSPHORIBOSYLTRANSFERASE"/>
    <property type="match status" value="1"/>
</dbReference>
<dbReference type="PANTHER" id="PTHR43864:SF1">
    <property type="entry name" value="XANTHINE PHOSPHORIBOSYLTRANSFERASE"/>
    <property type="match status" value="1"/>
</dbReference>
<dbReference type="Pfam" id="PF00156">
    <property type="entry name" value="Pribosyltran"/>
    <property type="match status" value="1"/>
</dbReference>
<dbReference type="SUPFAM" id="SSF53271">
    <property type="entry name" value="PRTase-like"/>
    <property type="match status" value="1"/>
</dbReference>
<proteinExistence type="inferred from homology"/>
<evidence type="ECO:0000255" key="1">
    <source>
        <dbReference type="HAMAP-Rule" id="MF_01184"/>
    </source>
</evidence>
<sequence length="193" mass="20985">MKLLEERILKDGHILGDNILKVDSFLTHQVDFSLMREIGKVFAEKFAATGITKVVTIEASGIAPAVFTAEALNVPMIFAKKAKNITMNEGILTAQVYSFTKQVTSTVSIAGKFLSPEDKVLIIDDFLANGQAAKGLIQIIEQAGATVQAIGIVIEKSFQDGRDLLEKAGYPVLSLARLDRFENGQVVFKEADL</sequence>
<keyword id="KW-0963">Cytoplasm</keyword>
<keyword id="KW-0328">Glycosyltransferase</keyword>
<keyword id="KW-0660">Purine salvage</keyword>
<keyword id="KW-0808">Transferase</keyword>
<feature type="chain" id="PRO_1000164458" description="Xanthine phosphoribosyltransferase">
    <location>
        <begin position="1"/>
        <end position="193"/>
    </location>
</feature>
<feature type="binding site" evidence="1">
    <location>
        <position position="20"/>
    </location>
    <ligand>
        <name>xanthine</name>
        <dbReference type="ChEBI" id="CHEBI:17712"/>
    </ligand>
</feature>
<feature type="binding site" evidence="1">
    <location>
        <position position="27"/>
    </location>
    <ligand>
        <name>xanthine</name>
        <dbReference type="ChEBI" id="CHEBI:17712"/>
    </ligand>
</feature>
<feature type="binding site" evidence="1">
    <location>
        <begin position="128"/>
        <end position="132"/>
    </location>
    <ligand>
        <name>5-phospho-alpha-D-ribose 1-diphosphate</name>
        <dbReference type="ChEBI" id="CHEBI:58017"/>
    </ligand>
</feature>
<feature type="binding site" evidence="1">
    <location>
        <position position="156"/>
    </location>
    <ligand>
        <name>xanthine</name>
        <dbReference type="ChEBI" id="CHEBI:17712"/>
    </ligand>
</feature>
<organism>
    <name type="scientific">Streptococcus pneumoniae (strain JJA)</name>
    <dbReference type="NCBI Taxonomy" id="488222"/>
    <lineage>
        <taxon>Bacteria</taxon>
        <taxon>Bacillati</taxon>
        <taxon>Bacillota</taxon>
        <taxon>Bacilli</taxon>
        <taxon>Lactobacillales</taxon>
        <taxon>Streptococcaceae</taxon>
        <taxon>Streptococcus</taxon>
    </lineage>
</organism>
<comment type="function">
    <text evidence="1">Converts the preformed base xanthine, a product of nucleic acid breakdown, to xanthosine 5'-monophosphate (XMP), so it can be reused for RNA or DNA synthesis.</text>
</comment>
<comment type="catalytic activity">
    <reaction evidence="1">
        <text>XMP + diphosphate = xanthine + 5-phospho-alpha-D-ribose 1-diphosphate</text>
        <dbReference type="Rhea" id="RHEA:10800"/>
        <dbReference type="ChEBI" id="CHEBI:17712"/>
        <dbReference type="ChEBI" id="CHEBI:33019"/>
        <dbReference type="ChEBI" id="CHEBI:57464"/>
        <dbReference type="ChEBI" id="CHEBI:58017"/>
        <dbReference type="EC" id="2.4.2.22"/>
    </reaction>
</comment>
<comment type="pathway">
    <text evidence="1">Purine metabolism; XMP biosynthesis via salvage pathway; XMP from xanthine: step 1/1.</text>
</comment>
<comment type="subunit">
    <text evidence="1">Homodimer.</text>
</comment>
<comment type="subcellular location">
    <subcellularLocation>
        <location evidence="1">Cytoplasm</location>
    </subcellularLocation>
</comment>
<comment type="similarity">
    <text evidence="1">Belongs to the purine/pyrimidine phosphoribosyltransferase family. Xpt subfamily.</text>
</comment>